<reference key="1">
    <citation type="submission" date="2006-02" db="EMBL/GenBank/DDBJ databases">
        <authorList>
            <consortium name="NIH - Mammalian Gene Collection (MGC) project"/>
        </authorList>
    </citation>
    <scope>NUCLEOTIDE SEQUENCE [LARGE SCALE MRNA]</scope>
    <source>
        <strain>Hereford</strain>
        <tissue>Heart ventricle</tissue>
    </source>
</reference>
<evidence type="ECO:0000250" key="1">
    <source>
        <dbReference type="UniProtKB" id="Q9BQG2"/>
    </source>
</evidence>
<evidence type="ECO:0000250" key="2">
    <source>
        <dbReference type="UniProtKB" id="Q9DCN1"/>
    </source>
</evidence>
<evidence type="ECO:0000255" key="3">
    <source>
        <dbReference type="PROSITE-ProRule" id="PRU00794"/>
    </source>
</evidence>
<evidence type="ECO:0000305" key="4"/>
<proteinExistence type="evidence at transcript level"/>
<keyword id="KW-0040">ANK repeat</keyword>
<keyword id="KW-0963">Cytoplasm</keyword>
<keyword id="KW-0378">Hydrolase</keyword>
<keyword id="KW-0460">Magnesium</keyword>
<keyword id="KW-0479">Metal-binding</keyword>
<keyword id="KW-0520">NAD</keyword>
<keyword id="KW-0521">NADP</keyword>
<keyword id="KW-0576">Peroxisome</keyword>
<keyword id="KW-1185">Reference proteome</keyword>
<keyword id="KW-0677">Repeat</keyword>
<keyword id="KW-0862">Zinc</keyword>
<accession>Q29RH3</accession>
<feature type="chain" id="PRO_0000260768" description="NAD-capped RNA hydrolase NUDT12">
    <location>
        <begin position="1"/>
        <end position="444"/>
    </location>
</feature>
<feature type="repeat" description="ANK 1">
    <location>
        <begin position="11"/>
        <end position="40"/>
    </location>
</feature>
<feature type="repeat" description="ANK 2">
    <location>
        <begin position="60"/>
        <end position="80"/>
    </location>
</feature>
<feature type="domain" description="Nudix hydrolase" evidence="3">
    <location>
        <begin position="301"/>
        <end position="435"/>
    </location>
</feature>
<feature type="short sequence motif" description="Nudix box">
    <location>
        <begin position="337"/>
        <end position="358"/>
    </location>
</feature>
<feature type="short sequence motif" description="Microbody targeting signal" evidence="1">
    <location>
        <begin position="442"/>
        <end position="444"/>
    </location>
</feature>
<feature type="binding site" evidence="2">
    <location>
        <position position="266"/>
    </location>
    <ligand>
        <name>Zn(2+)</name>
        <dbReference type="ChEBI" id="CHEBI:29105"/>
    </ligand>
</feature>
<feature type="binding site" evidence="2">
    <location>
        <position position="269"/>
    </location>
    <ligand>
        <name>Zn(2+)</name>
        <dbReference type="ChEBI" id="CHEBI:29105"/>
    </ligand>
</feature>
<feature type="binding site" evidence="2">
    <location>
        <position position="284"/>
    </location>
    <ligand>
        <name>Zn(2+)</name>
        <dbReference type="ChEBI" id="CHEBI:29105"/>
    </ligand>
</feature>
<feature type="binding site" evidence="2">
    <location>
        <position position="289"/>
    </location>
    <ligand>
        <name>Zn(2+)</name>
        <dbReference type="ChEBI" id="CHEBI:29105"/>
    </ligand>
</feature>
<feature type="binding site" evidence="2">
    <location>
        <position position="300"/>
    </location>
    <ligand>
        <name>substrate</name>
    </ligand>
</feature>
<feature type="binding site" evidence="2">
    <location>
        <begin position="336"/>
        <end position="338"/>
    </location>
    <ligand>
        <name>substrate</name>
    </ligand>
</feature>
<feature type="binding site" evidence="2">
    <location>
        <position position="336"/>
    </location>
    <ligand>
        <name>Mg(2+)</name>
        <dbReference type="ChEBI" id="CHEBI:18420"/>
        <label>1</label>
    </ligand>
</feature>
<feature type="binding site" evidence="2">
    <location>
        <position position="352"/>
    </location>
    <ligand>
        <name>Mg(2+)</name>
        <dbReference type="ChEBI" id="CHEBI:18420"/>
        <label>2</label>
    </ligand>
</feature>
<feature type="binding site" evidence="2">
    <location>
        <position position="352"/>
    </location>
    <ligand>
        <name>Mg(2+)</name>
        <dbReference type="ChEBI" id="CHEBI:18420"/>
        <label>3</label>
    </ligand>
</feature>
<feature type="binding site" evidence="2">
    <location>
        <position position="352"/>
    </location>
    <ligand>
        <name>substrate</name>
    </ligand>
</feature>
<feature type="binding site" evidence="2">
    <location>
        <position position="356"/>
    </location>
    <ligand>
        <name>Mg(2+)</name>
        <dbReference type="ChEBI" id="CHEBI:18420"/>
        <label>1</label>
    </ligand>
</feature>
<feature type="binding site" evidence="2">
    <location>
        <position position="356"/>
    </location>
    <ligand>
        <name>Mg(2+)</name>
        <dbReference type="ChEBI" id="CHEBI:18420"/>
        <label>3</label>
    </ligand>
</feature>
<feature type="binding site" evidence="2">
    <location>
        <position position="356"/>
    </location>
    <ligand>
        <name>substrate</name>
    </ligand>
</feature>
<feature type="binding site" evidence="2">
    <location>
        <position position="397"/>
    </location>
    <ligand>
        <name>Mg(2+)</name>
        <dbReference type="ChEBI" id="CHEBI:18420"/>
        <label>1</label>
    </ligand>
</feature>
<feature type="binding site" evidence="2">
    <location>
        <position position="397"/>
    </location>
    <ligand>
        <name>Mg(2+)</name>
        <dbReference type="ChEBI" id="CHEBI:18420"/>
        <label>3</label>
    </ligand>
</feature>
<feature type="binding site" evidence="2">
    <location>
        <position position="397"/>
    </location>
    <ligand>
        <name>substrate</name>
    </ligand>
</feature>
<feature type="modified residue" description="N6-succinyllysine" evidence="2">
    <location>
        <position position="167"/>
    </location>
</feature>
<feature type="modified residue" description="N6-succinyllysine" evidence="2">
    <location>
        <position position="274"/>
    </location>
</feature>
<organism>
    <name type="scientific">Bos taurus</name>
    <name type="common">Bovine</name>
    <dbReference type="NCBI Taxonomy" id="9913"/>
    <lineage>
        <taxon>Eukaryota</taxon>
        <taxon>Metazoa</taxon>
        <taxon>Chordata</taxon>
        <taxon>Craniata</taxon>
        <taxon>Vertebrata</taxon>
        <taxon>Euteleostomi</taxon>
        <taxon>Mammalia</taxon>
        <taxon>Eutheria</taxon>
        <taxon>Laurasiatheria</taxon>
        <taxon>Artiodactyla</taxon>
        <taxon>Ruminantia</taxon>
        <taxon>Pecora</taxon>
        <taxon>Bovidae</taxon>
        <taxon>Bovinae</taxon>
        <taxon>Bos</taxon>
    </lineage>
</organism>
<sequence length="444" mass="50119">MSSVKRSLNQEIISQFHYSAAEGDIAKLTAILSHSPSLLNETSENGWSALICDRSIVNKSRQTALDIAKFWGYKHIANLLANAKGGKKPWFLTNEVEECENYFSKTLLDRKSEKRNNSDWLLAKESHPATVYILFSDLNPLVTLGGNKESFQQPEVRLCQLNYTDIKDYLAQPEKITLIFLGVELEMKKEFFNYAGEISKEEEDGLVAWFALGIDTVAAEEFKQRHENCYFLHPPMPALLQLKEKEAGVVAQARSVLAWHSRYKFCPTCGNATKIEEGGYKRVCLKEDCPSLHGVHNTSYPRVDPVVIMQVIHPDGTKCLLGRQKRFPPGMFTCLAGFIEPGETIEDAVRREVEEESGVKVGHVQYVSCQPWPMPSSLMIGCLAVAVSTEIKVDKNEIEDARWFTREQVVDVLTKGKQQAFFVPPSRAIAHQLIKHWIGMNPNL</sequence>
<comment type="function">
    <text evidence="1 2">mRNA decapping enzyme that specifically removes the nicotinamide adenine dinucleotide (NAD) cap from a subset of mRNAs by hydrolyzing the diphosphate linkage to produce nicotinamide mononucleotide (NMN) and 5' monophosphate mRNA. The NAD-cap is present at the 5'-end of some RNAs; in contrast to the canonical N7 methylguanosine (m7G) cap, the NAD cap promotes mRNA decay. Preferentially acts on NAD-capped transcripts in response to nutrient stress (By similarity). Also acts on free nicotinamide adenine dinucleotide molecules: hydrolyzes NAD(H) into NMN(H) and AMP, and NADPH into NMNH and 2',5'-ADP. May act to regulate the concentration of peroxisomal nicotinamide nucleotide cofactors required for oxidative metabolism in this organelle (By similarity). Regulates the levels of circadian clock components PER1, PER2, PER3 and CRY2 in the liver (By similarity).</text>
</comment>
<comment type="catalytic activity">
    <reaction evidence="2">
        <text>a 5'-end NAD(+)-phospho-ribonucleoside in mRNA + H2O = a 5'-end phospho-adenosine-phospho-ribonucleoside in mRNA + beta-nicotinamide D-ribonucleotide + 2 H(+)</text>
        <dbReference type="Rhea" id="RHEA:60876"/>
        <dbReference type="Rhea" id="RHEA-COMP:15698"/>
        <dbReference type="Rhea" id="RHEA-COMP:15719"/>
        <dbReference type="ChEBI" id="CHEBI:14649"/>
        <dbReference type="ChEBI" id="CHEBI:15377"/>
        <dbReference type="ChEBI" id="CHEBI:15378"/>
        <dbReference type="ChEBI" id="CHEBI:144029"/>
        <dbReference type="ChEBI" id="CHEBI:144051"/>
    </reaction>
    <physiologicalReaction direction="left-to-right" evidence="2">
        <dbReference type="Rhea" id="RHEA:60877"/>
    </physiologicalReaction>
</comment>
<comment type="catalytic activity">
    <reaction evidence="1">
        <text>NAD(+) + H2O = beta-nicotinamide D-ribonucleotide + AMP + 2 H(+)</text>
        <dbReference type="Rhea" id="RHEA:11800"/>
        <dbReference type="ChEBI" id="CHEBI:14649"/>
        <dbReference type="ChEBI" id="CHEBI:15377"/>
        <dbReference type="ChEBI" id="CHEBI:15378"/>
        <dbReference type="ChEBI" id="CHEBI:57540"/>
        <dbReference type="ChEBI" id="CHEBI:456215"/>
        <dbReference type="EC" id="3.6.1.22"/>
    </reaction>
    <physiologicalReaction direction="left-to-right" evidence="1">
        <dbReference type="Rhea" id="RHEA:11801"/>
    </physiologicalReaction>
</comment>
<comment type="catalytic activity">
    <reaction evidence="1">
        <text>NADH + H2O = reduced beta-nicotinamide D-ribonucleotide + AMP + 2 H(+)</text>
        <dbReference type="Rhea" id="RHEA:48868"/>
        <dbReference type="ChEBI" id="CHEBI:15377"/>
        <dbReference type="ChEBI" id="CHEBI:15378"/>
        <dbReference type="ChEBI" id="CHEBI:57945"/>
        <dbReference type="ChEBI" id="CHEBI:90832"/>
        <dbReference type="ChEBI" id="CHEBI:456215"/>
        <dbReference type="EC" id="3.6.1.22"/>
    </reaction>
    <physiologicalReaction direction="left-to-right" evidence="1">
        <dbReference type="Rhea" id="RHEA:48869"/>
    </physiologicalReaction>
</comment>
<comment type="catalytic activity">
    <reaction evidence="1">
        <text>NADPH + H2O = reduced beta-nicotinamide D-ribonucleotide + adenosine 2',5'-bisphosphate + 2 H(+)</text>
        <dbReference type="Rhea" id="RHEA:60820"/>
        <dbReference type="ChEBI" id="CHEBI:15377"/>
        <dbReference type="ChEBI" id="CHEBI:15378"/>
        <dbReference type="ChEBI" id="CHEBI:57783"/>
        <dbReference type="ChEBI" id="CHEBI:90832"/>
        <dbReference type="ChEBI" id="CHEBI:194156"/>
    </reaction>
    <physiologicalReaction direction="left-to-right" evidence="1">
        <dbReference type="Rhea" id="RHEA:60821"/>
    </physiologicalReaction>
</comment>
<comment type="cofactor">
    <cofactor evidence="2">
        <name>Mg(2+)</name>
        <dbReference type="ChEBI" id="CHEBI:18420"/>
    </cofactor>
    <text evidence="2">Binds 3 Mg(2+) ions per subunit.</text>
</comment>
<comment type="cofactor">
    <cofactor evidence="2">
        <name>Zn(2+)</name>
        <dbReference type="ChEBI" id="CHEBI:29105"/>
    </cofactor>
    <text evidence="2">Binds 1 zinc ion per subunit.</text>
</comment>
<comment type="subunit">
    <text evidence="1 2">Homodimer (By similarity). Homodimerization is essential for its catalytic activity and protein stability (By similarity). Interacts (via ANK repeats) with BLMH (By similarity).</text>
</comment>
<comment type="subcellular location">
    <subcellularLocation>
        <location evidence="1">Cytoplasm</location>
    </subcellularLocation>
    <subcellularLocation>
        <location evidence="1">Peroxisome</location>
    </subcellularLocation>
    <subcellularLocation>
        <location evidence="1">Cytoplasmic granule</location>
    </subcellularLocation>
    <text evidence="1">Localizes to cytoplasmic granules in the presence of BLMH.</text>
</comment>
<comment type="similarity">
    <text evidence="4">Belongs to the Nudix hydrolase family. NudC subfamily.</text>
</comment>
<dbReference type="EC" id="3.6.1.-" evidence="2"/>
<dbReference type="EC" id="3.6.1.22" evidence="1"/>
<dbReference type="EMBL" id="BC114173">
    <property type="protein sequence ID" value="AAI14174.1"/>
    <property type="molecule type" value="mRNA"/>
</dbReference>
<dbReference type="RefSeq" id="NP_001040073.1">
    <property type="nucleotide sequence ID" value="NM_001046608.2"/>
</dbReference>
<dbReference type="SMR" id="Q29RH3"/>
<dbReference type="FunCoup" id="Q29RH3">
    <property type="interactions" value="349"/>
</dbReference>
<dbReference type="STRING" id="9913.ENSBTAP00000039749"/>
<dbReference type="PaxDb" id="9913-ENSBTAP00000039749"/>
<dbReference type="GeneID" id="617720"/>
<dbReference type="KEGG" id="bta:617720"/>
<dbReference type="CTD" id="83594"/>
<dbReference type="VEuPathDB" id="HostDB:ENSBTAG00000027728"/>
<dbReference type="eggNOG" id="KOG0504">
    <property type="taxonomic scope" value="Eukaryota"/>
</dbReference>
<dbReference type="eggNOG" id="KOG3084">
    <property type="taxonomic scope" value="Eukaryota"/>
</dbReference>
<dbReference type="HOGENOM" id="CLU_037162_0_2_1"/>
<dbReference type="InParanoid" id="Q29RH3"/>
<dbReference type="OMA" id="CNTRTTL"/>
<dbReference type="OrthoDB" id="10249612at2759"/>
<dbReference type="TreeFam" id="TF106352"/>
<dbReference type="Reactome" id="R-BTA-197264">
    <property type="pathway name" value="Nicotinamide salvaging"/>
</dbReference>
<dbReference type="Proteomes" id="UP000009136">
    <property type="component" value="Chromosome 7"/>
</dbReference>
<dbReference type="Bgee" id="ENSBTAG00000027728">
    <property type="expression patterns" value="Expressed in liver and 107 other cell types or tissues"/>
</dbReference>
<dbReference type="GO" id="GO:0005777">
    <property type="term" value="C:peroxisome"/>
    <property type="evidence" value="ECO:0000318"/>
    <property type="project" value="GO_Central"/>
</dbReference>
<dbReference type="GO" id="GO:0000287">
    <property type="term" value="F:magnesium ion binding"/>
    <property type="evidence" value="ECO:0000250"/>
    <property type="project" value="UniProtKB"/>
</dbReference>
<dbReference type="GO" id="GO:0000210">
    <property type="term" value="F:NAD+ diphosphatase activity"/>
    <property type="evidence" value="ECO:0007669"/>
    <property type="project" value="RHEA"/>
</dbReference>
<dbReference type="GO" id="GO:0035529">
    <property type="term" value="F:NADH pyrophosphatase activity"/>
    <property type="evidence" value="ECO:0000318"/>
    <property type="project" value="GO_Central"/>
</dbReference>
<dbReference type="GO" id="GO:0010943">
    <property type="term" value="F:NADPH pyrophosphatase activity"/>
    <property type="evidence" value="ECO:0007669"/>
    <property type="project" value="RHEA"/>
</dbReference>
<dbReference type="GO" id="GO:0110153">
    <property type="term" value="F:RNA NAD-cap (NMN-forming) hydrolase activity"/>
    <property type="evidence" value="ECO:0000250"/>
    <property type="project" value="UniProtKB"/>
</dbReference>
<dbReference type="GO" id="GO:0008270">
    <property type="term" value="F:zinc ion binding"/>
    <property type="evidence" value="ECO:0000250"/>
    <property type="project" value="UniProtKB"/>
</dbReference>
<dbReference type="GO" id="GO:0032922">
    <property type="term" value="P:circadian regulation of gene expression"/>
    <property type="evidence" value="ECO:0000250"/>
    <property type="project" value="UniProtKB"/>
</dbReference>
<dbReference type="GO" id="GO:0006402">
    <property type="term" value="P:mRNA catabolic process"/>
    <property type="evidence" value="ECO:0000250"/>
    <property type="project" value="UniProtKB"/>
</dbReference>
<dbReference type="GO" id="GO:0019677">
    <property type="term" value="P:NAD catabolic process"/>
    <property type="evidence" value="ECO:0000318"/>
    <property type="project" value="GO_Central"/>
</dbReference>
<dbReference type="GO" id="GO:0110155">
    <property type="term" value="P:NAD-cap decapping"/>
    <property type="evidence" value="ECO:0000250"/>
    <property type="project" value="UniProtKB"/>
</dbReference>
<dbReference type="GO" id="GO:0006734">
    <property type="term" value="P:NADH metabolic process"/>
    <property type="evidence" value="ECO:0000318"/>
    <property type="project" value="GO_Central"/>
</dbReference>
<dbReference type="GO" id="GO:0006742">
    <property type="term" value="P:NADP catabolic process"/>
    <property type="evidence" value="ECO:0000318"/>
    <property type="project" value="GO_Central"/>
</dbReference>
<dbReference type="CDD" id="cd03429">
    <property type="entry name" value="NUDIX_NADH_pyrophosphatase_Nudt13"/>
    <property type="match status" value="1"/>
</dbReference>
<dbReference type="FunFam" id="3.90.79.10:FF:000023">
    <property type="entry name" value="Peroxisomal NADH pyrophosphatase NUDT12"/>
    <property type="match status" value="1"/>
</dbReference>
<dbReference type="FunFam" id="3.90.79.20:FF:000002">
    <property type="entry name" value="Peroxisomal NADH pyrophosphatase NUDT12"/>
    <property type="match status" value="1"/>
</dbReference>
<dbReference type="Gene3D" id="3.90.79.20">
    <property type="match status" value="1"/>
</dbReference>
<dbReference type="Gene3D" id="1.25.40.20">
    <property type="entry name" value="Ankyrin repeat-containing domain"/>
    <property type="match status" value="1"/>
</dbReference>
<dbReference type="Gene3D" id="3.90.79.10">
    <property type="entry name" value="Nucleoside Triphosphate Pyrophosphohydrolase"/>
    <property type="match status" value="1"/>
</dbReference>
<dbReference type="InterPro" id="IPR036770">
    <property type="entry name" value="Ankyrin_rpt-contain_sf"/>
</dbReference>
<dbReference type="InterPro" id="IPR050241">
    <property type="entry name" value="NAD-cap_RNA_hydrolase_NudC"/>
</dbReference>
<dbReference type="InterPro" id="IPR015375">
    <property type="entry name" value="NADH_PPase-like_N"/>
</dbReference>
<dbReference type="InterPro" id="IPR049734">
    <property type="entry name" value="NudC-like_C"/>
</dbReference>
<dbReference type="InterPro" id="IPR015797">
    <property type="entry name" value="NUDIX_hydrolase-like_dom_sf"/>
</dbReference>
<dbReference type="InterPro" id="IPR020084">
    <property type="entry name" value="NUDIX_hydrolase_CS"/>
</dbReference>
<dbReference type="InterPro" id="IPR000086">
    <property type="entry name" value="NUDIX_hydrolase_dom"/>
</dbReference>
<dbReference type="InterPro" id="IPR015376">
    <property type="entry name" value="Znr_NADH_PPase"/>
</dbReference>
<dbReference type="NCBIfam" id="NF001299">
    <property type="entry name" value="PRK00241.1"/>
    <property type="match status" value="1"/>
</dbReference>
<dbReference type="PANTHER" id="PTHR42904:SF6">
    <property type="entry name" value="NAD-CAPPED RNA HYDROLASE NUDT12"/>
    <property type="match status" value="1"/>
</dbReference>
<dbReference type="PANTHER" id="PTHR42904">
    <property type="entry name" value="NUDIX HYDROLASE, NUDC SUBFAMILY"/>
    <property type="match status" value="1"/>
</dbReference>
<dbReference type="Pfam" id="PF00293">
    <property type="entry name" value="NUDIX"/>
    <property type="match status" value="1"/>
</dbReference>
<dbReference type="Pfam" id="PF09296">
    <property type="entry name" value="NUDIX-like"/>
    <property type="match status" value="1"/>
</dbReference>
<dbReference type="Pfam" id="PF09297">
    <property type="entry name" value="Zn_ribbon_NUD"/>
    <property type="match status" value="1"/>
</dbReference>
<dbReference type="SUPFAM" id="SSF48403">
    <property type="entry name" value="Ankyrin repeat"/>
    <property type="match status" value="1"/>
</dbReference>
<dbReference type="SUPFAM" id="SSF55811">
    <property type="entry name" value="Nudix"/>
    <property type="match status" value="1"/>
</dbReference>
<dbReference type="PROSITE" id="PS51462">
    <property type="entry name" value="NUDIX"/>
    <property type="match status" value="1"/>
</dbReference>
<dbReference type="PROSITE" id="PS00893">
    <property type="entry name" value="NUDIX_BOX"/>
    <property type="match status" value="1"/>
</dbReference>
<protein>
    <recommendedName>
        <fullName evidence="4">NAD-capped RNA hydrolase NUDT12</fullName>
        <shortName evidence="4">DeNADding enzyme NUDT12</shortName>
        <ecNumber evidence="2">3.6.1.-</ecNumber>
    </recommendedName>
    <alternativeName>
        <fullName evidence="4">NADH pyrophosphatase NUDT12</fullName>
        <ecNumber evidence="1">3.6.1.22</ecNumber>
    </alternativeName>
    <alternativeName>
        <fullName evidence="4">Nucleoside diphosphate-linked moiety X motif 12</fullName>
        <shortName evidence="4">Nudix motif 12</shortName>
    </alternativeName>
</protein>
<gene>
    <name evidence="1" type="primary">NUDT12</name>
</gene>
<name>NUD12_BOVIN</name>